<accession>A1KW66</accession>
<comment type="function">
    <text evidence="1">Exhibits a very high intrinsic GTPase hydrolysis rate. Involved in the addition of a carboxymethylaminomethyl (cmnm) group at the wobble position (U34) of certain tRNAs, forming tRNA-cmnm(5)s(2)U34.</text>
</comment>
<comment type="cofactor">
    <cofactor evidence="1">
        <name>K(+)</name>
        <dbReference type="ChEBI" id="CHEBI:29103"/>
    </cofactor>
    <text evidence="1">Binds 1 potassium ion per subunit.</text>
</comment>
<comment type="subunit">
    <text evidence="1">Homodimer. Heterotetramer of two MnmE and two MnmG subunits.</text>
</comment>
<comment type="subcellular location">
    <subcellularLocation>
        <location evidence="1">Cytoplasm</location>
    </subcellularLocation>
</comment>
<comment type="similarity">
    <text evidence="1">Belongs to the TRAFAC class TrmE-Era-EngA-EngB-Septin-like GTPase superfamily. TrmE GTPase family.</text>
</comment>
<proteinExistence type="inferred from homology"/>
<sequence>MSDNVPTIAAVATAPGRGGVGVIRISGKNLLPMAEALCGKTPKPRVATYADFTDADGQAIDSGLLLFFAAPASFTGEDVIELQGHGGPVVMDMLLNRCLELGARLAEPGEFTKRAFLNDKLDLAQAEGVADLIDASSRSAARLALRSLKGDFSRRIHGLVEDLITLRMLVEATLDFPEEDIDFLEAADARGKLDGLRRAVDDVLANAQQGAILREGLNVVLVGAPNVGKSSLLNALAGDEVAIVTDIAGTTRDAVRERILIDGVPVHIVDTAGLRETDDVVERIGIERSRKAVSEADVALVLVDPREGVNDKTRAILDALPPELKRIEIHSKSDLHAHAAGGFGTGAETVIALSAKTGDGLDALKRTLLREAGWQGEGEGLFLARTRHVNALKAAQEELSLAALCGNHQIELFAEHLRLAQVACGEITGEFTADDLLGVIFSRFCIGK</sequence>
<dbReference type="EC" id="3.6.-.-" evidence="1"/>
<dbReference type="EMBL" id="AM421808">
    <property type="protein sequence ID" value="CAM11122.1"/>
    <property type="molecule type" value="Genomic_DNA"/>
</dbReference>
<dbReference type="RefSeq" id="WP_002221663.1">
    <property type="nucleotide sequence ID" value="NC_008767.1"/>
</dbReference>
<dbReference type="SMR" id="A1KW66"/>
<dbReference type="KEGG" id="nmc:NMC1962"/>
<dbReference type="HOGENOM" id="CLU_019624_4_1_4"/>
<dbReference type="Proteomes" id="UP000002286">
    <property type="component" value="Chromosome"/>
</dbReference>
<dbReference type="GO" id="GO:0005829">
    <property type="term" value="C:cytosol"/>
    <property type="evidence" value="ECO:0007669"/>
    <property type="project" value="TreeGrafter"/>
</dbReference>
<dbReference type="GO" id="GO:0005525">
    <property type="term" value="F:GTP binding"/>
    <property type="evidence" value="ECO:0007669"/>
    <property type="project" value="UniProtKB-UniRule"/>
</dbReference>
<dbReference type="GO" id="GO:0003924">
    <property type="term" value="F:GTPase activity"/>
    <property type="evidence" value="ECO:0007669"/>
    <property type="project" value="UniProtKB-UniRule"/>
</dbReference>
<dbReference type="GO" id="GO:0046872">
    <property type="term" value="F:metal ion binding"/>
    <property type="evidence" value="ECO:0007669"/>
    <property type="project" value="UniProtKB-KW"/>
</dbReference>
<dbReference type="GO" id="GO:0030488">
    <property type="term" value="P:tRNA methylation"/>
    <property type="evidence" value="ECO:0007669"/>
    <property type="project" value="TreeGrafter"/>
</dbReference>
<dbReference type="GO" id="GO:0002098">
    <property type="term" value="P:tRNA wobble uridine modification"/>
    <property type="evidence" value="ECO:0007669"/>
    <property type="project" value="TreeGrafter"/>
</dbReference>
<dbReference type="CDD" id="cd04164">
    <property type="entry name" value="trmE"/>
    <property type="match status" value="1"/>
</dbReference>
<dbReference type="CDD" id="cd14858">
    <property type="entry name" value="TrmE_N"/>
    <property type="match status" value="1"/>
</dbReference>
<dbReference type="FunFam" id="3.30.1360.120:FF:000001">
    <property type="entry name" value="tRNA modification GTPase MnmE"/>
    <property type="match status" value="1"/>
</dbReference>
<dbReference type="FunFam" id="3.40.50.300:FF:001376">
    <property type="entry name" value="tRNA modification GTPase MnmE"/>
    <property type="match status" value="1"/>
</dbReference>
<dbReference type="Gene3D" id="3.40.50.300">
    <property type="entry name" value="P-loop containing nucleotide triphosphate hydrolases"/>
    <property type="match status" value="1"/>
</dbReference>
<dbReference type="Gene3D" id="3.30.1360.120">
    <property type="entry name" value="Probable tRNA modification gtpase trme, domain 1"/>
    <property type="match status" value="1"/>
</dbReference>
<dbReference type="Gene3D" id="1.20.120.430">
    <property type="entry name" value="tRNA modification GTPase MnmE domain 2"/>
    <property type="match status" value="1"/>
</dbReference>
<dbReference type="HAMAP" id="MF_00379">
    <property type="entry name" value="GTPase_MnmE"/>
    <property type="match status" value="1"/>
</dbReference>
<dbReference type="InterPro" id="IPR031168">
    <property type="entry name" value="G_TrmE"/>
</dbReference>
<dbReference type="InterPro" id="IPR006073">
    <property type="entry name" value="GTP-bd"/>
</dbReference>
<dbReference type="InterPro" id="IPR018948">
    <property type="entry name" value="GTP-bd_TrmE_N"/>
</dbReference>
<dbReference type="InterPro" id="IPR004520">
    <property type="entry name" value="GTPase_MnmE"/>
</dbReference>
<dbReference type="InterPro" id="IPR027368">
    <property type="entry name" value="MnmE_dom2"/>
</dbReference>
<dbReference type="InterPro" id="IPR025867">
    <property type="entry name" value="MnmE_helical"/>
</dbReference>
<dbReference type="InterPro" id="IPR027417">
    <property type="entry name" value="P-loop_NTPase"/>
</dbReference>
<dbReference type="InterPro" id="IPR005225">
    <property type="entry name" value="Small_GTP-bd"/>
</dbReference>
<dbReference type="InterPro" id="IPR027266">
    <property type="entry name" value="TrmE/GcvT_dom1"/>
</dbReference>
<dbReference type="NCBIfam" id="TIGR00450">
    <property type="entry name" value="mnmE_trmE_thdF"/>
    <property type="match status" value="1"/>
</dbReference>
<dbReference type="NCBIfam" id="NF003661">
    <property type="entry name" value="PRK05291.1-3"/>
    <property type="match status" value="1"/>
</dbReference>
<dbReference type="NCBIfam" id="TIGR00231">
    <property type="entry name" value="small_GTP"/>
    <property type="match status" value="1"/>
</dbReference>
<dbReference type="PANTHER" id="PTHR42714">
    <property type="entry name" value="TRNA MODIFICATION GTPASE GTPBP3"/>
    <property type="match status" value="1"/>
</dbReference>
<dbReference type="PANTHER" id="PTHR42714:SF2">
    <property type="entry name" value="TRNA MODIFICATION GTPASE GTPBP3, MITOCHONDRIAL"/>
    <property type="match status" value="1"/>
</dbReference>
<dbReference type="Pfam" id="PF01926">
    <property type="entry name" value="MMR_HSR1"/>
    <property type="match status" value="1"/>
</dbReference>
<dbReference type="Pfam" id="PF12631">
    <property type="entry name" value="MnmE_helical"/>
    <property type="match status" value="1"/>
</dbReference>
<dbReference type="Pfam" id="PF10396">
    <property type="entry name" value="TrmE_N"/>
    <property type="match status" value="1"/>
</dbReference>
<dbReference type="SUPFAM" id="SSF52540">
    <property type="entry name" value="P-loop containing nucleoside triphosphate hydrolases"/>
    <property type="match status" value="1"/>
</dbReference>
<dbReference type="SUPFAM" id="SSF116878">
    <property type="entry name" value="TrmE connector domain"/>
    <property type="match status" value="1"/>
</dbReference>
<dbReference type="PROSITE" id="PS51709">
    <property type="entry name" value="G_TRME"/>
    <property type="match status" value="1"/>
</dbReference>
<organism>
    <name type="scientific">Neisseria meningitidis serogroup C / serotype 2a (strain ATCC 700532 / DSM 15464 / FAM18)</name>
    <dbReference type="NCBI Taxonomy" id="272831"/>
    <lineage>
        <taxon>Bacteria</taxon>
        <taxon>Pseudomonadati</taxon>
        <taxon>Pseudomonadota</taxon>
        <taxon>Betaproteobacteria</taxon>
        <taxon>Neisseriales</taxon>
        <taxon>Neisseriaceae</taxon>
        <taxon>Neisseria</taxon>
    </lineage>
</organism>
<feature type="chain" id="PRO_0000345850" description="tRNA modification GTPase MnmE">
    <location>
        <begin position="1"/>
        <end position="448"/>
    </location>
</feature>
<feature type="domain" description="TrmE-type G">
    <location>
        <begin position="216"/>
        <end position="373"/>
    </location>
</feature>
<feature type="binding site" evidence="1">
    <location>
        <position position="24"/>
    </location>
    <ligand>
        <name>(6S)-5-formyl-5,6,7,8-tetrahydrofolate</name>
        <dbReference type="ChEBI" id="CHEBI:57457"/>
    </ligand>
</feature>
<feature type="binding site" evidence="1">
    <location>
        <position position="81"/>
    </location>
    <ligand>
        <name>(6S)-5-formyl-5,6,7,8-tetrahydrofolate</name>
        <dbReference type="ChEBI" id="CHEBI:57457"/>
    </ligand>
</feature>
<feature type="binding site" evidence="1">
    <location>
        <position position="120"/>
    </location>
    <ligand>
        <name>(6S)-5-formyl-5,6,7,8-tetrahydrofolate</name>
        <dbReference type="ChEBI" id="CHEBI:57457"/>
    </ligand>
</feature>
<feature type="binding site" evidence="1">
    <location>
        <begin position="226"/>
        <end position="231"/>
    </location>
    <ligand>
        <name>GTP</name>
        <dbReference type="ChEBI" id="CHEBI:37565"/>
    </ligand>
</feature>
<feature type="binding site" evidence="1">
    <location>
        <position position="226"/>
    </location>
    <ligand>
        <name>K(+)</name>
        <dbReference type="ChEBI" id="CHEBI:29103"/>
    </ligand>
</feature>
<feature type="binding site" evidence="1">
    <location>
        <position position="230"/>
    </location>
    <ligand>
        <name>Mg(2+)</name>
        <dbReference type="ChEBI" id="CHEBI:18420"/>
    </ligand>
</feature>
<feature type="binding site" evidence="1">
    <location>
        <begin position="245"/>
        <end position="251"/>
    </location>
    <ligand>
        <name>GTP</name>
        <dbReference type="ChEBI" id="CHEBI:37565"/>
    </ligand>
</feature>
<feature type="binding site" evidence="1">
    <location>
        <position position="245"/>
    </location>
    <ligand>
        <name>K(+)</name>
        <dbReference type="ChEBI" id="CHEBI:29103"/>
    </ligand>
</feature>
<feature type="binding site" evidence="1">
    <location>
        <position position="247"/>
    </location>
    <ligand>
        <name>K(+)</name>
        <dbReference type="ChEBI" id="CHEBI:29103"/>
    </ligand>
</feature>
<feature type="binding site" evidence="1">
    <location>
        <position position="250"/>
    </location>
    <ligand>
        <name>K(+)</name>
        <dbReference type="ChEBI" id="CHEBI:29103"/>
    </ligand>
</feature>
<feature type="binding site" evidence="1">
    <location>
        <position position="251"/>
    </location>
    <ligand>
        <name>Mg(2+)</name>
        <dbReference type="ChEBI" id="CHEBI:18420"/>
    </ligand>
</feature>
<feature type="binding site" evidence="1">
    <location>
        <begin position="270"/>
        <end position="273"/>
    </location>
    <ligand>
        <name>GTP</name>
        <dbReference type="ChEBI" id="CHEBI:37565"/>
    </ligand>
</feature>
<feature type="binding site" evidence="1">
    <location>
        <position position="448"/>
    </location>
    <ligand>
        <name>(6S)-5-formyl-5,6,7,8-tetrahydrofolate</name>
        <dbReference type="ChEBI" id="CHEBI:57457"/>
    </ligand>
</feature>
<keyword id="KW-0963">Cytoplasm</keyword>
<keyword id="KW-0342">GTP-binding</keyword>
<keyword id="KW-0378">Hydrolase</keyword>
<keyword id="KW-0460">Magnesium</keyword>
<keyword id="KW-0479">Metal-binding</keyword>
<keyword id="KW-0547">Nucleotide-binding</keyword>
<keyword id="KW-0630">Potassium</keyword>
<keyword id="KW-0819">tRNA processing</keyword>
<protein>
    <recommendedName>
        <fullName evidence="1">tRNA modification GTPase MnmE</fullName>
        <ecNumber evidence="1">3.6.-.-</ecNumber>
    </recommendedName>
</protein>
<gene>
    <name evidence="1" type="primary">mnmE</name>
    <name evidence="1" type="synonym">trmE</name>
    <name type="ordered locus">NMC1962</name>
</gene>
<name>MNME_NEIMF</name>
<reference key="1">
    <citation type="journal article" date="2007" name="PLoS Genet.">
        <title>Meningococcal genetic variation mechanisms viewed through comparative analysis of serogroup C strain FAM18.</title>
        <authorList>
            <person name="Bentley S.D."/>
            <person name="Vernikos G.S."/>
            <person name="Snyder L.A.S."/>
            <person name="Churcher C."/>
            <person name="Arrowsmith C."/>
            <person name="Chillingworth T."/>
            <person name="Cronin A."/>
            <person name="Davis P.H."/>
            <person name="Holroyd N.E."/>
            <person name="Jagels K."/>
            <person name="Maddison M."/>
            <person name="Moule S."/>
            <person name="Rabbinowitsch E."/>
            <person name="Sharp S."/>
            <person name="Unwin L."/>
            <person name="Whitehead S."/>
            <person name="Quail M.A."/>
            <person name="Achtman M."/>
            <person name="Barrell B.G."/>
            <person name="Saunders N.J."/>
            <person name="Parkhill J."/>
        </authorList>
    </citation>
    <scope>NUCLEOTIDE SEQUENCE [LARGE SCALE GENOMIC DNA]</scope>
    <source>
        <strain>ATCC 700532 / DSM 15464 / FAM18</strain>
    </source>
</reference>
<evidence type="ECO:0000255" key="1">
    <source>
        <dbReference type="HAMAP-Rule" id="MF_00379"/>
    </source>
</evidence>